<reference key="1">
    <citation type="journal article" date="2009" name="BMC Microbiol.">
        <title>The genome sequence of Geobacter metallireducens: features of metabolism, physiology and regulation common and dissimilar to Geobacter sulfurreducens.</title>
        <authorList>
            <person name="Aklujkar M."/>
            <person name="Krushkal J."/>
            <person name="DiBartolo G."/>
            <person name="Lapidus A."/>
            <person name="Land M.L."/>
            <person name="Lovley D.R."/>
        </authorList>
    </citation>
    <scope>NUCLEOTIDE SEQUENCE [LARGE SCALE GENOMIC DNA]</scope>
    <source>
        <strain>ATCC 53774 / DSM 7210 / GS-15</strain>
    </source>
</reference>
<proteinExistence type="inferred from homology"/>
<evidence type="ECO:0000255" key="1">
    <source>
        <dbReference type="HAMAP-Rule" id="MF_00012"/>
    </source>
</evidence>
<feature type="chain" id="PRO_1000000985" description="Dihydroxy-acid dehydratase">
    <location>
        <begin position="1"/>
        <end position="553"/>
    </location>
</feature>
<feature type="active site" description="Proton acceptor" evidence="1">
    <location>
        <position position="467"/>
    </location>
</feature>
<feature type="binding site" evidence="1">
    <location>
        <position position="78"/>
    </location>
    <ligand>
        <name>Mg(2+)</name>
        <dbReference type="ChEBI" id="CHEBI:18420"/>
    </ligand>
</feature>
<feature type="binding site" evidence="1">
    <location>
        <position position="119"/>
    </location>
    <ligand>
        <name>[2Fe-2S] cluster</name>
        <dbReference type="ChEBI" id="CHEBI:190135"/>
    </ligand>
</feature>
<feature type="binding site" evidence="1">
    <location>
        <position position="120"/>
    </location>
    <ligand>
        <name>Mg(2+)</name>
        <dbReference type="ChEBI" id="CHEBI:18420"/>
    </ligand>
</feature>
<feature type="binding site" description="via carbamate group" evidence="1">
    <location>
        <position position="121"/>
    </location>
    <ligand>
        <name>Mg(2+)</name>
        <dbReference type="ChEBI" id="CHEBI:18420"/>
    </ligand>
</feature>
<feature type="binding site" evidence="1">
    <location>
        <position position="193"/>
    </location>
    <ligand>
        <name>[2Fe-2S] cluster</name>
        <dbReference type="ChEBI" id="CHEBI:190135"/>
    </ligand>
</feature>
<feature type="binding site" evidence="1">
    <location>
        <position position="441"/>
    </location>
    <ligand>
        <name>Mg(2+)</name>
        <dbReference type="ChEBI" id="CHEBI:18420"/>
    </ligand>
</feature>
<feature type="modified residue" description="N6-carboxylysine" evidence="1">
    <location>
        <position position="121"/>
    </location>
</feature>
<name>ILVD_GEOMG</name>
<dbReference type="EC" id="4.2.1.9" evidence="1"/>
<dbReference type="EMBL" id="CP000148">
    <property type="protein sequence ID" value="ABB31495.1"/>
    <property type="molecule type" value="Genomic_DNA"/>
</dbReference>
<dbReference type="RefSeq" id="WP_004512108.1">
    <property type="nucleotide sequence ID" value="NC_007517.1"/>
</dbReference>
<dbReference type="SMR" id="Q39W79"/>
<dbReference type="STRING" id="269799.Gmet_1259"/>
<dbReference type="KEGG" id="gme:Gmet_1259"/>
<dbReference type="eggNOG" id="COG0129">
    <property type="taxonomic scope" value="Bacteria"/>
</dbReference>
<dbReference type="HOGENOM" id="CLU_014271_4_2_7"/>
<dbReference type="UniPathway" id="UPA00047">
    <property type="reaction ID" value="UER00057"/>
</dbReference>
<dbReference type="UniPathway" id="UPA00049">
    <property type="reaction ID" value="UER00061"/>
</dbReference>
<dbReference type="Proteomes" id="UP000007073">
    <property type="component" value="Chromosome"/>
</dbReference>
<dbReference type="GO" id="GO:0005829">
    <property type="term" value="C:cytosol"/>
    <property type="evidence" value="ECO:0007669"/>
    <property type="project" value="TreeGrafter"/>
</dbReference>
<dbReference type="GO" id="GO:0051537">
    <property type="term" value="F:2 iron, 2 sulfur cluster binding"/>
    <property type="evidence" value="ECO:0007669"/>
    <property type="project" value="UniProtKB-UniRule"/>
</dbReference>
<dbReference type="GO" id="GO:0004160">
    <property type="term" value="F:dihydroxy-acid dehydratase activity"/>
    <property type="evidence" value="ECO:0007669"/>
    <property type="project" value="UniProtKB-UniRule"/>
</dbReference>
<dbReference type="GO" id="GO:0000287">
    <property type="term" value="F:magnesium ion binding"/>
    <property type="evidence" value="ECO:0007669"/>
    <property type="project" value="UniProtKB-UniRule"/>
</dbReference>
<dbReference type="GO" id="GO:0009097">
    <property type="term" value="P:isoleucine biosynthetic process"/>
    <property type="evidence" value="ECO:0007669"/>
    <property type="project" value="UniProtKB-UniRule"/>
</dbReference>
<dbReference type="GO" id="GO:0009099">
    <property type="term" value="P:L-valine biosynthetic process"/>
    <property type="evidence" value="ECO:0007669"/>
    <property type="project" value="UniProtKB-UniRule"/>
</dbReference>
<dbReference type="FunFam" id="3.50.30.80:FF:000001">
    <property type="entry name" value="Dihydroxy-acid dehydratase"/>
    <property type="match status" value="1"/>
</dbReference>
<dbReference type="Gene3D" id="3.50.30.80">
    <property type="entry name" value="IlvD/EDD C-terminal domain-like"/>
    <property type="match status" value="1"/>
</dbReference>
<dbReference type="HAMAP" id="MF_00012">
    <property type="entry name" value="IlvD"/>
    <property type="match status" value="1"/>
</dbReference>
<dbReference type="InterPro" id="IPR042096">
    <property type="entry name" value="Dihydro-acid_dehy_C"/>
</dbReference>
<dbReference type="InterPro" id="IPR004404">
    <property type="entry name" value="DihydroxyA_deHydtase"/>
</dbReference>
<dbReference type="InterPro" id="IPR020558">
    <property type="entry name" value="DiOHA_6PGluconate_deHydtase_CS"/>
</dbReference>
<dbReference type="InterPro" id="IPR056740">
    <property type="entry name" value="ILV_EDD_C"/>
</dbReference>
<dbReference type="InterPro" id="IPR000581">
    <property type="entry name" value="ILV_EDD_N"/>
</dbReference>
<dbReference type="InterPro" id="IPR037237">
    <property type="entry name" value="IlvD/EDD_N"/>
</dbReference>
<dbReference type="NCBIfam" id="TIGR00110">
    <property type="entry name" value="ilvD"/>
    <property type="match status" value="1"/>
</dbReference>
<dbReference type="NCBIfam" id="NF002068">
    <property type="entry name" value="PRK00911.1"/>
    <property type="match status" value="1"/>
</dbReference>
<dbReference type="PANTHER" id="PTHR43661">
    <property type="entry name" value="D-XYLONATE DEHYDRATASE"/>
    <property type="match status" value="1"/>
</dbReference>
<dbReference type="PANTHER" id="PTHR43661:SF3">
    <property type="entry name" value="D-XYLONATE DEHYDRATASE YAGF-RELATED"/>
    <property type="match status" value="1"/>
</dbReference>
<dbReference type="Pfam" id="PF24877">
    <property type="entry name" value="ILV_EDD_C"/>
    <property type="match status" value="1"/>
</dbReference>
<dbReference type="Pfam" id="PF00920">
    <property type="entry name" value="ILVD_EDD_N"/>
    <property type="match status" value="1"/>
</dbReference>
<dbReference type="SUPFAM" id="SSF143975">
    <property type="entry name" value="IlvD/EDD N-terminal domain-like"/>
    <property type="match status" value="1"/>
</dbReference>
<dbReference type="SUPFAM" id="SSF52016">
    <property type="entry name" value="LeuD/IlvD-like"/>
    <property type="match status" value="1"/>
</dbReference>
<dbReference type="PROSITE" id="PS00886">
    <property type="entry name" value="ILVD_EDD_1"/>
    <property type="match status" value="1"/>
</dbReference>
<dbReference type="PROSITE" id="PS00887">
    <property type="entry name" value="ILVD_EDD_2"/>
    <property type="match status" value="1"/>
</dbReference>
<gene>
    <name evidence="1" type="primary">ilvD</name>
    <name type="ordered locus">Gmet_1259</name>
</gene>
<protein>
    <recommendedName>
        <fullName evidence="1">Dihydroxy-acid dehydratase</fullName>
        <shortName evidence="1">DAD</shortName>
        <ecNumber evidence="1">4.2.1.9</ecNumber>
    </recommendedName>
</protein>
<keyword id="KW-0001">2Fe-2S</keyword>
<keyword id="KW-0028">Amino-acid biosynthesis</keyword>
<keyword id="KW-0100">Branched-chain amino acid biosynthesis</keyword>
<keyword id="KW-0408">Iron</keyword>
<keyword id="KW-0411">Iron-sulfur</keyword>
<keyword id="KW-0456">Lyase</keyword>
<keyword id="KW-0460">Magnesium</keyword>
<keyword id="KW-0479">Metal-binding</keyword>
<keyword id="KW-1185">Reference proteome</keyword>
<organism>
    <name type="scientific">Geobacter metallireducens (strain ATCC 53774 / DSM 7210 / GS-15)</name>
    <dbReference type="NCBI Taxonomy" id="269799"/>
    <lineage>
        <taxon>Bacteria</taxon>
        <taxon>Pseudomonadati</taxon>
        <taxon>Thermodesulfobacteriota</taxon>
        <taxon>Desulfuromonadia</taxon>
        <taxon>Geobacterales</taxon>
        <taxon>Geobacteraceae</taxon>
        <taxon>Geobacter</taxon>
    </lineage>
</organism>
<comment type="function">
    <text evidence="1">Functions in the biosynthesis of branched-chain amino acids. Catalyzes the dehydration of (2R,3R)-2,3-dihydroxy-3-methylpentanoate (2,3-dihydroxy-3-methylvalerate) into 2-oxo-3-methylpentanoate (2-oxo-3-methylvalerate) and of (2R)-2,3-dihydroxy-3-methylbutanoate (2,3-dihydroxyisovalerate) into 2-oxo-3-methylbutanoate (2-oxoisovalerate), the penultimate precursor to L-isoleucine and L-valine, respectively.</text>
</comment>
<comment type="catalytic activity">
    <reaction evidence="1">
        <text>(2R)-2,3-dihydroxy-3-methylbutanoate = 3-methyl-2-oxobutanoate + H2O</text>
        <dbReference type="Rhea" id="RHEA:24809"/>
        <dbReference type="ChEBI" id="CHEBI:11851"/>
        <dbReference type="ChEBI" id="CHEBI:15377"/>
        <dbReference type="ChEBI" id="CHEBI:49072"/>
        <dbReference type="EC" id="4.2.1.9"/>
    </reaction>
    <physiologicalReaction direction="left-to-right" evidence="1">
        <dbReference type="Rhea" id="RHEA:24810"/>
    </physiologicalReaction>
</comment>
<comment type="catalytic activity">
    <reaction evidence="1">
        <text>(2R,3R)-2,3-dihydroxy-3-methylpentanoate = (S)-3-methyl-2-oxopentanoate + H2O</text>
        <dbReference type="Rhea" id="RHEA:27694"/>
        <dbReference type="ChEBI" id="CHEBI:15377"/>
        <dbReference type="ChEBI" id="CHEBI:35146"/>
        <dbReference type="ChEBI" id="CHEBI:49258"/>
        <dbReference type="EC" id="4.2.1.9"/>
    </reaction>
    <physiologicalReaction direction="left-to-right" evidence="1">
        <dbReference type="Rhea" id="RHEA:27695"/>
    </physiologicalReaction>
</comment>
<comment type="cofactor">
    <cofactor evidence="1">
        <name>[2Fe-2S] cluster</name>
        <dbReference type="ChEBI" id="CHEBI:190135"/>
    </cofactor>
    <text evidence="1">Binds 1 [2Fe-2S] cluster per subunit. This cluster acts as a Lewis acid cofactor.</text>
</comment>
<comment type="cofactor">
    <cofactor evidence="1">
        <name>Mg(2+)</name>
        <dbReference type="ChEBI" id="CHEBI:18420"/>
    </cofactor>
</comment>
<comment type="pathway">
    <text evidence="1">Amino-acid biosynthesis; L-isoleucine biosynthesis; L-isoleucine from 2-oxobutanoate: step 3/4.</text>
</comment>
<comment type="pathway">
    <text evidence="1">Amino-acid biosynthesis; L-valine biosynthesis; L-valine from pyruvate: step 3/4.</text>
</comment>
<comment type="subunit">
    <text evidence="1">Homodimer.</text>
</comment>
<comment type="similarity">
    <text evidence="1">Belongs to the IlvD/Edd family.</text>
</comment>
<sequence length="553" mass="58483">MRSDTIKQGIERTPHRALIKGTGVPQSEMAKPFIGVATSFTDLIPGHVGMRDLERFIEKGIHSGGGYAFFFGIPGVCDGIAMGHKGMHYSLPTRELIADMVESVAEAHRLDGLVLLTNCDKITPGMLMAAARLDIPTIVVTAGPMMAGRGVEGRRFSFVTDTFEAMARYKAGVIDAKELQVCEDNACPGMGSCQGLFTANTMAILTETLGMSLPRCGTALAVSALKRRIAFASGEKIVDLVRNGVTPRQILTRAAFENAIRVDLALGGSSNTVLHLLAIAREAGVDLPLETFDILSKETPQIASMNPAGEYFMEDLDAAGGVVGVLKQLGGTIKDSPTVLGLTTRELASTVESVDERVIRPVSDPVKKEGGIAVLFGNLAPKGAVVKQSGVSAPMMQFEGTARCFDSEELAMAALMGGKITSGDVVVIRYEGPKGGPGMREMLAPTATLMGLGLGDSVALVTDGRFSGGTRGPCIGHISPEAAEGGPIALVEEGDRIRLDIPNRKLELLVDESILAERRSRWVAPEPKIKTGWLARYAKVVTSAYTGAVTTAE</sequence>
<accession>Q39W79</accession>